<sequence>MSEESNDDKKPTTKFELERETELRFEVEASQSVQLELLAGMAEIFGTELTRNKKFTFDAGAKVAVFTWHGCSLQLSGRTEVAYVSKDTPMLLYLNTHTALEQMRRQAEKEEERGPRVMVVGPTDVGKSTVCRLLLNYAVRLGRRPTYVELDVGQGSVSIPGTMGALYIERPADVEEGFSIQAPLVYHFGSTTPGTNIKLYNKITSRLADVFNQRCEVNRRASVSGCVINTCGWVKGYGYQALVHAASAFEVDVVVVLDQERLYNELKRDLPHFVRTVLLPKSGGVVERSKDFRRECRDERIREYFYGFRGCFYPHAFNVKFSDVKIYKVGAPTIPDSCLPLGMSQEDNQLKLVPVTPGRDMVHHLLSVSTAEGTEENLSETSVAGFIVVTSVDVEHQVFTVLSPAPRPLPKNFLLIMDIRFMDLK</sequence>
<gene>
    <name type="primary">Clp1</name>
</gene>
<proteinExistence type="evidence at transcript level"/>
<dbReference type="EC" id="2.7.1.78" evidence="2"/>
<dbReference type="EMBL" id="CH473949">
    <property type="protein sequence ID" value="EDL79312.1"/>
    <property type="molecule type" value="Genomic_DNA"/>
</dbReference>
<dbReference type="EMBL" id="BC087130">
    <property type="protein sequence ID" value="AAH87130.1"/>
    <property type="molecule type" value="mRNA"/>
</dbReference>
<dbReference type="RefSeq" id="NP_001009599.1">
    <property type="nucleotide sequence ID" value="NM_001009599.1"/>
</dbReference>
<dbReference type="RefSeq" id="XP_006234524.1">
    <property type="nucleotide sequence ID" value="XM_006234462.2"/>
</dbReference>
<dbReference type="RefSeq" id="XP_017447198.1">
    <property type="nucleotide sequence ID" value="XM_017591709.1"/>
</dbReference>
<dbReference type="SMR" id="Q5PQL4"/>
<dbReference type="BioGRID" id="259846">
    <property type="interactions" value="1"/>
</dbReference>
<dbReference type="FunCoup" id="Q5PQL4">
    <property type="interactions" value="2786"/>
</dbReference>
<dbReference type="STRING" id="10116.ENSRNOP00000009726"/>
<dbReference type="GlyGen" id="Q5PQL4">
    <property type="glycosylation" value="2 sites"/>
</dbReference>
<dbReference type="PhosphoSitePlus" id="Q5PQL4"/>
<dbReference type="PaxDb" id="10116-ENSRNOP00000009726"/>
<dbReference type="Ensembl" id="ENSRNOT00000009726.6">
    <property type="protein sequence ID" value="ENSRNOP00000009726.4"/>
    <property type="gene ID" value="ENSRNOG00000007416.6"/>
</dbReference>
<dbReference type="GeneID" id="311166"/>
<dbReference type="KEGG" id="rno:311166"/>
<dbReference type="UCSC" id="RGD:1307679">
    <property type="organism name" value="rat"/>
</dbReference>
<dbReference type="AGR" id="RGD:1307679"/>
<dbReference type="CTD" id="10978"/>
<dbReference type="RGD" id="1307679">
    <property type="gene designation" value="Clp1"/>
</dbReference>
<dbReference type="eggNOG" id="KOG2749">
    <property type="taxonomic scope" value="Eukaryota"/>
</dbReference>
<dbReference type="GeneTree" id="ENSGT00940000153668"/>
<dbReference type="HOGENOM" id="CLU_018195_1_0_1"/>
<dbReference type="InParanoid" id="Q5PQL4"/>
<dbReference type="OMA" id="VQYVNCH"/>
<dbReference type="OrthoDB" id="258143at2759"/>
<dbReference type="PhylomeDB" id="Q5PQL4"/>
<dbReference type="TreeFam" id="TF105795"/>
<dbReference type="Reactome" id="R-RNO-72187">
    <property type="pathway name" value="mRNA 3'-end processing"/>
</dbReference>
<dbReference type="Reactome" id="R-RNO-72203">
    <property type="pathway name" value="Processing of Capped Intron-Containing Pre-mRNA"/>
</dbReference>
<dbReference type="Reactome" id="R-RNO-73856">
    <property type="pathway name" value="RNA Polymerase II Transcription Termination"/>
</dbReference>
<dbReference type="Reactome" id="R-RNO-77595">
    <property type="pathway name" value="Processing of Intronless Pre-mRNAs"/>
</dbReference>
<dbReference type="PRO" id="PR:Q5PQL4"/>
<dbReference type="Proteomes" id="UP000002494">
    <property type="component" value="Chromosome 3"/>
</dbReference>
<dbReference type="Proteomes" id="UP000234681">
    <property type="component" value="Chromosome 3"/>
</dbReference>
<dbReference type="Bgee" id="ENSRNOG00000007416">
    <property type="expression patterns" value="Expressed in testis and 20 other cell types or tissues"/>
</dbReference>
<dbReference type="GO" id="GO:0005829">
    <property type="term" value="C:cytosol"/>
    <property type="evidence" value="ECO:0007669"/>
    <property type="project" value="Ensembl"/>
</dbReference>
<dbReference type="GO" id="GO:0005849">
    <property type="term" value="C:mRNA cleavage factor complex"/>
    <property type="evidence" value="ECO:0007669"/>
    <property type="project" value="UniProtKB-UniRule"/>
</dbReference>
<dbReference type="GO" id="GO:0005654">
    <property type="term" value="C:nucleoplasm"/>
    <property type="evidence" value="ECO:0007669"/>
    <property type="project" value="Ensembl"/>
</dbReference>
<dbReference type="GO" id="GO:0005634">
    <property type="term" value="C:nucleus"/>
    <property type="evidence" value="ECO:0000266"/>
    <property type="project" value="RGD"/>
</dbReference>
<dbReference type="GO" id="GO:0000214">
    <property type="term" value="C:tRNA-intron endonuclease complex"/>
    <property type="evidence" value="ECO:0000250"/>
    <property type="project" value="UniProtKB"/>
</dbReference>
<dbReference type="GO" id="GO:0005524">
    <property type="term" value="F:ATP binding"/>
    <property type="evidence" value="ECO:0007669"/>
    <property type="project" value="UniProtKB-UniRule"/>
</dbReference>
<dbReference type="GO" id="GO:0046404">
    <property type="term" value="F:ATP-dependent polydeoxyribonucleotide 5'-hydroxyl-kinase activity"/>
    <property type="evidence" value="ECO:0000266"/>
    <property type="project" value="RGD"/>
</dbReference>
<dbReference type="GO" id="GO:0051736">
    <property type="term" value="F:ATP-dependent polyribonucleotide 5'-hydroxyl-kinase activity"/>
    <property type="evidence" value="ECO:0000266"/>
    <property type="project" value="RGD"/>
</dbReference>
<dbReference type="GO" id="GO:0051731">
    <property type="term" value="F:polynucleotide 5'-hydroxyl-kinase activity"/>
    <property type="evidence" value="ECO:0000318"/>
    <property type="project" value="GO_Central"/>
</dbReference>
<dbReference type="GO" id="GO:0021695">
    <property type="term" value="P:cerebellar cortex development"/>
    <property type="evidence" value="ECO:0000250"/>
    <property type="project" value="UniProtKB"/>
</dbReference>
<dbReference type="GO" id="GO:0098795">
    <property type="term" value="P:global gene silencing by mRNA cleavage"/>
    <property type="evidence" value="ECO:0000250"/>
    <property type="project" value="UniProtKB"/>
</dbReference>
<dbReference type="GO" id="GO:0031124">
    <property type="term" value="P:mRNA 3'-end processing"/>
    <property type="evidence" value="ECO:0007669"/>
    <property type="project" value="UniProtKB-UniRule"/>
</dbReference>
<dbReference type="GO" id="GO:0070922">
    <property type="term" value="P:RISC complex assembly"/>
    <property type="evidence" value="ECO:0000250"/>
    <property type="project" value="UniProtKB"/>
</dbReference>
<dbReference type="GO" id="GO:0006388">
    <property type="term" value="P:tRNA splicing, via endonucleolytic cleavage and ligation"/>
    <property type="evidence" value="ECO:0000250"/>
    <property type="project" value="UniProtKB"/>
</dbReference>
<dbReference type="CDD" id="cd01983">
    <property type="entry name" value="SIMIBI"/>
    <property type="match status" value="1"/>
</dbReference>
<dbReference type="FunFam" id="2.40.30.330:FF:000001">
    <property type="entry name" value="Protein CLP1 homolog"/>
    <property type="match status" value="1"/>
</dbReference>
<dbReference type="FunFam" id="3.40.50.300:FF:000454">
    <property type="entry name" value="Protein CLP1 homolog"/>
    <property type="match status" value="1"/>
</dbReference>
<dbReference type="FunFam" id="2.60.120.1030:FF:000001">
    <property type="entry name" value="Protein CLP1 homolog 5"/>
    <property type="match status" value="1"/>
</dbReference>
<dbReference type="Gene3D" id="2.60.120.1030">
    <property type="entry name" value="Clp1, DNA binding domain"/>
    <property type="match status" value="1"/>
</dbReference>
<dbReference type="Gene3D" id="3.40.50.300">
    <property type="entry name" value="P-loop containing nucleotide triphosphate hydrolases"/>
    <property type="match status" value="1"/>
</dbReference>
<dbReference type="Gene3D" id="2.40.30.330">
    <property type="entry name" value="Pre-mRNA cleavage complex subunit Clp1, C-terminal domain"/>
    <property type="match status" value="1"/>
</dbReference>
<dbReference type="HAMAP" id="MF_03035">
    <property type="entry name" value="Clp1"/>
    <property type="match status" value="1"/>
</dbReference>
<dbReference type="InterPro" id="IPR028606">
    <property type="entry name" value="Clp1"/>
</dbReference>
<dbReference type="InterPro" id="IPR045116">
    <property type="entry name" value="Clp1/Grc3"/>
</dbReference>
<dbReference type="InterPro" id="IPR010655">
    <property type="entry name" value="Clp1_C"/>
</dbReference>
<dbReference type="InterPro" id="IPR038238">
    <property type="entry name" value="Clp1_C_sf"/>
</dbReference>
<dbReference type="InterPro" id="IPR032324">
    <property type="entry name" value="Clp1_N"/>
</dbReference>
<dbReference type="InterPro" id="IPR038239">
    <property type="entry name" value="Clp1_N_sf"/>
</dbReference>
<dbReference type="InterPro" id="IPR032319">
    <property type="entry name" value="CLP1_P"/>
</dbReference>
<dbReference type="InterPro" id="IPR027417">
    <property type="entry name" value="P-loop_NTPase"/>
</dbReference>
<dbReference type="PANTHER" id="PTHR12755">
    <property type="entry name" value="CLEAVAGE/POLYADENYLATION FACTOR IA SUBUNIT CLP1P"/>
    <property type="match status" value="1"/>
</dbReference>
<dbReference type="PANTHER" id="PTHR12755:SF6">
    <property type="entry name" value="POLYRIBONUCLEOTIDE 5'-HYDROXYL-KINASE CLP1"/>
    <property type="match status" value="1"/>
</dbReference>
<dbReference type="Pfam" id="PF06807">
    <property type="entry name" value="Clp1"/>
    <property type="match status" value="1"/>
</dbReference>
<dbReference type="Pfam" id="PF16573">
    <property type="entry name" value="CLP1_N"/>
    <property type="match status" value="1"/>
</dbReference>
<dbReference type="Pfam" id="PF16575">
    <property type="entry name" value="CLP1_P"/>
    <property type="match status" value="1"/>
</dbReference>
<dbReference type="SUPFAM" id="SSF52540">
    <property type="entry name" value="P-loop containing nucleoside triphosphate hydrolases"/>
    <property type="match status" value="1"/>
</dbReference>
<keyword id="KW-0067">ATP-binding</keyword>
<keyword id="KW-0418">Kinase</keyword>
<keyword id="KW-0460">Magnesium</keyword>
<keyword id="KW-0464">Manganese</keyword>
<keyword id="KW-0507">mRNA processing</keyword>
<keyword id="KW-0533">Nickel</keyword>
<keyword id="KW-0547">Nucleotide-binding</keyword>
<keyword id="KW-0539">Nucleus</keyword>
<keyword id="KW-1185">Reference proteome</keyword>
<keyword id="KW-0808">Transferase</keyword>
<keyword id="KW-0819">tRNA processing</keyword>
<organism>
    <name type="scientific">Rattus norvegicus</name>
    <name type="common">Rat</name>
    <dbReference type="NCBI Taxonomy" id="10116"/>
    <lineage>
        <taxon>Eukaryota</taxon>
        <taxon>Metazoa</taxon>
        <taxon>Chordata</taxon>
        <taxon>Craniata</taxon>
        <taxon>Vertebrata</taxon>
        <taxon>Euteleostomi</taxon>
        <taxon>Mammalia</taxon>
        <taxon>Eutheria</taxon>
        <taxon>Euarchontoglires</taxon>
        <taxon>Glires</taxon>
        <taxon>Rodentia</taxon>
        <taxon>Myomorpha</taxon>
        <taxon>Muroidea</taxon>
        <taxon>Muridae</taxon>
        <taxon>Murinae</taxon>
        <taxon>Rattus</taxon>
    </lineage>
</organism>
<comment type="function">
    <text evidence="1">Polynucleotide kinase that can phosphorylate the 5'-hydroxyl groups of double-stranded RNA (dsRNA), single-stranded RNA (ssRNA), double-stranded DNA (dsDNA) and double-stranded DNA:RNA hybrids. dsRNA is phosphorylated more efficiently than dsDNA, and the RNA component of a DNA:RNA hybrid is phosphorylated more efficiently than the DNA component. Plays a key role in both tRNA splicing and mRNA 3'-end formation. Component of the tRNA splicing endonuclease complex: phosphorylates the 5'-terminus of the tRNA 3'-exon during tRNA splicing; this phosphorylation event is a prerequisite for the subsequent ligation of the two exon halves and the production of a mature tRNA. Its role in tRNA splicing and maturation is required for cerebellar development. Component of the pre-mRNA cleavage complex II (CF-II), which seems to be required for mRNA 3'-end formation. Also phosphorylates the 5'-terminus of exogenously introduced short interfering RNAs (siRNAs), which is a necessary prerequisite for their incorporation into the RNA-induced silencing complex (RISC). However, endogenous siRNAs and microRNAs (miRNAs) that are produced by the cleavage of dsRNA precursors by DICER1 already contain a 5'-phosphate group, so this protein may be dispensible for normal RNA-mediated gene silencing (By similarity).</text>
</comment>
<comment type="catalytic activity">
    <reaction evidence="2">
        <text>a 5'-end dephospho-2'-deoxyribonucleoside-DNA + ATP = a 5'-end 5'-phospho-2'-deoxyribonucleoside-DNA + ADP + H(+)</text>
        <dbReference type="Rhea" id="RHEA:15669"/>
        <dbReference type="Rhea" id="RHEA-COMP:13180"/>
        <dbReference type="Rhea" id="RHEA-COMP:13184"/>
        <dbReference type="ChEBI" id="CHEBI:15378"/>
        <dbReference type="ChEBI" id="CHEBI:30616"/>
        <dbReference type="ChEBI" id="CHEBI:136412"/>
        <dbReference type="ChEBI" id="CHEBI:136416"/>
        <dbReference type="ChEBI" id="CHEBI:456216"/>
        <dbReference type="EC" id="2.7.1.78"/>
    </reaction>
</comment>
<comment type="catalytic activity">
    <reaction evidence="2">
        <text>a 5'-end dephospho-ribonucleoside-RNA + ATP = a 5'-end 5'-phospho-ribonucleoside-RNA + ADP + H(+)</text>
        <dbReference type="Rhea" id="RHEA:54580"/>
        <dbReference type="Rhea" id="RHEA-COMP:13936"/>
        <dbReference type="Rhea" id="RHEA-COMP:15179"/>
        <dbReference type="ChEBI" id="CHEBI:15378"/>
        <dbReference type="ChEBI" id="CHEBI:30616"/>
        <dbReference type="ChEBI" id="CHEBI:138282"/>
        <dbReference type="ChEBI" id="CHEBI:138284"/>
        <dbReference type="ChEBI" id="CHEBI:456216"/>
        <dbReference type="EC" id="2.7.1.78"/>
    </reaction>
</comment>
<comment type="cofactor">
    <cofactor evidence="2">
        <name>Mg(2+)</name>
        <dbReference type="ChEBI" id="CHEBI:18420"/>
    </cofactor>
    <cofactor evidence="2">
        <name>Mn(2+)</name>
        <dbReference type="ChEBI" id="CHEBI:29035"/>
    </cofactor>
    <cofactor evidence="2">
        <name>Ni(2+)</name>
        <dbReference type="ChEBI" id="CHEBI:49786"/>
    </cofactor>
</comment>
<comment type="subunit">
    <text evidence="2">Component of the tRNA splicing endonuclease complex, composed of CLP1, TSEN2, TSEN15, TSEN34 and TSEN54. Component of pre-mRNA cleavage complex II (CF-II). Also associates with numerous components of the pre-mRNA cleavage complex I (CF-I/CFIm), including NUDT21, CPSF2, CPSF3, CPSF6 and CPSF7. Interacts with CSTF2 and SYMPK.</text>
</comment>
<comment type="subcellular location">
    <subcellularLocation>
        <location evidence="2">Nucleus</location>
    </subcellularLocation>
</comment>
<comment type="similarity">
    <text evidence="2">Belongs to the Clp1 family. Clp1 subfamily.</text>
</comment>
<name>CLP1_RAT</name>
<accession>Q5PQL4</accession>
<evidence type="ECO:0000250" key="1"/>
<evidence type="ECO:0000255" key="2">
    <source>
        <dbReference type="HAMAP-Rule" id="MF_03035"/>
    </source>
</evidence>
<protein>
    <recommendedName>
        <fullName evidence="2">Polyribonucleotide 5'-hydroxyl-kinase Clp1</fullName>
        <ecNumber evidence="2">2.7.1.78</ecNumber>
    </recommendedName>
    <alternativeName>
        <fullName evidence="2">Polyadenylation factor Clp1</fullName>
    </alternativeName>
    <alternativeName>
        <fullName evidence="2">Polynucleotide kinase Clp1</fullName>
    </alternativeName>
    <alternativeName>
        <fullName evidence="2">Pre-mRNA cleavage complex II protein Clp1</fullName>
    </alternativeName>
</protein>
<feature type="chain" id="PRO_0000375168" description="Polyribonucleotide 5'-hydroxyl-kinase Clp1">
    <location>
        <begin position="1"/>
        <end position="425"/>
    </location>
</feature>
<feature type="binding site" evidence="2">
    <location>
        <position position="22"/>
    </location>
    <ligand>
        <name>ATP</name>
        <dbReference type="ChEBI" id="CHEBI:30616"/>
    </ligand>
</feature>
<feature type="binding site" evidence="2">
    <location>
        <position position="62"/>
    </location>
    <ligand>
        <name>ATP</name>
        <dbReference type="ChEBI" id="CHEBI:30616"/>
    </ligand>
</feature>
<feature type="binding site" evidence="2">
    <location>
        <begin position="124"/>
        <end position="129"/>
    </location>
    <ligand>
        <name>ATP</name>
        <dbReference type="ChEBI" id="CHEBI:30616"/>
    </ligand>
</feature>
<reference key="1">
    <citation type="submission" date="2005-07" db="EMBL/GenBank/DDBJ databases">
        <authorList>
            <person name="Mural R.J."/>
            <person name="Adams M.D."/>
            <person name="Myers E.W."/>
            <person name="Smith H.O."/>
            <person name="Venter J.C."/>
        </authorList>
    </citation>
    <scope>NUCLEOTIDE SEQUENCE [LARGE SCALE GENOMIC DNA]</scope>
    <source>
        <strain>Brown Norway</strain>
    </source>
</reference>
<reference key="2">
    <citation type="journal article" date="2004" name="Genome Res.">
        <title>The status, quality, and expansion of the NIH full-length cDNA project: the Mammalian Gene Collection (MGC).</title>
        <authorList>
            <consortium name="The MGC Project Team"/>
        </authorList>
    </citation>
    <scope>NUCLEOTIDE SEQUENCE [LARGE SCALE MRNA]</scope>
    <source>
        <tissue>Testis</tissue>
    </source>
</reference>